<organism>
    <name type="scientific">Dictyostelium discoideum</name>
    <name type="common">Social amoeba</name>
    <dbReference type="NCBI Taxonomy" id="44689"/>
    <lineage>
        <taxon>Eukaryota</taxon>
        <taxon>Amoebozoa</taxon>
        <taxon>Evosea</taxon>
        <taxon>Eumycetozoa</taxon>
        <taxon>Dictyostelia</taxon>
        <taxon>Dictyosteliales</taxon>
        <taxon>Dictyosteliaceae</taxon>
        <taxon>Dictyostelium</taxon>
    </lineage>
</organism>
<feature type="chain" id="PRO_0000327562" description="Ribonuclease H2 subunit A">
    <location>
        <begin position="1"/>
        <end position="289"/>
    </location>
</feature>
<feature type="domain" description="RNase H type-2" evidence="2">
    <location>
        <begin position="20"/>
        <end position="249"/>
    </location>
</feature>
<feature type="binding site" evidence="1">
    <location>
        <position position="26"/>
    </location>
    <ligand>
        <name>a divalent metal cation</name>
        <dbReference type="ChEBI" id="CHEBI:60240"/>
    </ligand>
</feature>
<feature type="binding site" evidence="1">
    <location>
        <position position="27"/>
    </location>
    <ligand>
        <name>a divalent metal cation</name>
        <dbReference type="ChEBI" id="CHEBI:60240"/>
    </ligand>
</feature>
<feature type="binding site" evidence="1">
    <location>
        <position position="134"/>
    </location>
    <ligand>
        <name>a divalent metal cation</name>
        <dbReference type="ChEBI" id="CHEBI:60240"/>
    </ligand>
</feature>
<proteinExistence type="inferred from homology"/>
<name>RNH2A_DICDI</name>
<keyword id="KW-0255">Endonuclease</keyword>
<keyword id="KW-0378">Hydrolase</keyword>
<keyword id="KW-0479">Metal-binding</keyword>
<keyword id="KW-0540">Nuclease</keyword>
<keyword id="KW-1185">Reference proteome</keyword>
<protein>
    <recommendedName>
        <fullName>Ribonuclease H2 subunit A</fullName>
        <shortName>RNase H2 subunit A</shortName>
        <ecNumber>3.1.26.4</ecNumber>
    </recommendedName>
</protein>
<sequence length="289" mass="33083">MDNKIIYLTELDSSVDKSEPFVMGIDEAGRGPVMGPMVYGCCYAPISKSTTLKSMKFNDSKKLTEQQRDQLFDKMGESNKILAYETDVITAEILSEKMLYKKPISLNVISHESAIGLIRSVLKKGVNVQELYLDTVGPPDKYQLMLKKLFPEIGKIIVSKKADSLYPIVSAASIAAKVVRDFEITNKNFDYLNIYDQDEQLSTDFGSGYPSDPLSKKWLVKNRDKVFGYPNFIRFSWKTTETAMRGACFGVDWVLENDKLKQHFQENQNDKKRFMFFKENNIENCINDF</sequence>
<evidence type="ECO:0000250" key="1"/>
<evidence type="ECO:0000255" key="2">
    <source>
        <dbReference type="PROSITE-ProRule" id="PRU01319"/>
    </source>
</evidence>
<evidence type="ECO:0000305" key="3"/>
<dbReference type="EC" id="3.1.26.4"/>
<dbReference type="EMBL" id="AAFI02000194">
    <property type="protein sequence ID" value="EAL61095.1"/>
    <property type="molecule type" value="Genomic_DNA"/>
</dbReference>
<dbReference type="RefSeq" id="XP_629507.1">
    <property type="nucleotide sequence ID" value="XM_629505.1"/>
</dbReference>
<dbReference type="SMR" id="Q54D13"/>
<dbReference type="FunCoup" id="Q54D13">
    <property type="interactions" value="100"/>
</dbReference>
<dbReference type="STRING" id="44689.Q54D13"/>
<dbReference type="PaxDb" id="44689-DDB0266383"/>
<dbReference type="EnsemblProtists" id="EAL61095">
    <property type="protein sequence ID" value="EAL61095"/>
    <property type="gene ID" value="DDB_G0292584"/>
</dbReference>
<dbReference type="GeneID" id="8628758"/>
<dbReference type="KEGG" id="ddi:DDB_G0292584"/>
<dbReference type="dictyBase" id="DDB_G0292584">
    <property type="gene designation" value="rnaseh2A"/>
</dbReference>
<dbReference type="VEuPathDB" id="AmoebaDB:DDB_G0292584"/>
<dbReference type="eggNOG" id="KOG2299">
    <property type="taxonomic scope" value="Eukaryota"/>
</dbReference>
<dbReference type="HOGENOM" id="CLU_036532_0_4_1"/>
<dbReference type="InParanoid" id="Q54D13"/>
<dbReference type="OMA" id="REECRFF"/>
<dbReference type="PhylomeDB" id="Q54D13"/>
<dbReference type="PRO" id="PR:Q54D13"/>
<dbReference type="Proteomes" id="UP000002195">
    <property type="component" value="Chromosome 6"/>
</dbReference>
<dbReference type="GO" id="GO:0032299">
    <property type="term" value="C:ribonuclease H2 complex"/>
    <property type="evidence" value="ECO:0000250"/>
    <property type="project" value="dictyBase"/>
</dbReference>
<dbReference type="GO" id="GO:0046872">
    <property type="term" value="F:metal ion binding"/>
    <property type="evidence" value="ECO:0007669"/>
    <property type="project" value="UniProtKB-KW"/>
</dbReference>
<dbReference type="GO" id="GO:0003723">
    <property type="term" value="F:RNA binding"/>
    <property type="evidence" value="ECO:0007669"/>
    <property type="project" value="InterPro"/>
</dbReference>
<dbReference type="GO" id="GO:0004523">
    <property type="term" value="F:RNA-DNA hybrid ribonuclease activity"/>
    <property type="evidence" value="ECO:0000250"/>
    <property type="project" value="dictyBase"/>
</dbReference>
<dbReference type="GO" id="GO:0043137">
    <property type="term" value="P:DNA replication, removal of RNA primer"/>
    <property type="evidence" value="ECO:0000318"/>
    <property type="project" value="GO_Central"/>
</dbReference>
<dbReference type="GO" id="GO:0006298">
    <property type="term" value="P:mismatch repair"/>
    <property type="evidence" value="ECO:0000318"/>
    <property type="project" value="GO_Central"/>
</dbReference>
<dbReference type="GO" id="GO:0016070">
    <property type="term" value="P:RNA metabolic process"/>
    <property type="evidence" value="ECO:0000305"/>
    <property type="project" value="dictyBase"/>
</dbReference>
<dbReference type="CDD" id="cd07181">
    <property type="entry name" value="RNase_HII_eukaryota_like"/>
    <property type="match status" value="1"/>
</dbReference>
<dbReference type="FunFam" id="1.10.10.460:FF:000001">
    <property type="entry name" value="Ribonuclease"/>
    <property type="match status" value="1"/>
</dbReference>
<dbReference type="FunFam" id="3.30.420.10:FF:000088">
    <property type="entry name" value="Ribonuclease"/>
    <property type="match status" value="1"/>
</dbReference>
<dbReference type="Gene3D" id="3.30.420.10">
    <property type="entry name" value="Ribonuclease H-like superfamily/Ribonuclease H"/>
    <property type="match status" value="1"/>
</dbReference>
<dbReference type="Gene3D" id="1.10.10.460">
    <property type="entry name" value="Ribonuclease hii. Domain 2"/>
    <property type="match status" value="1"/>
</dbReference>
<dbReference type="InterPro" id="IPR004649">
    <property type="entry name" value="RNase_H2_suA"/>
</dbReference>
<dbReference type="InterPro" id="IPR001352">
    <property type="entry name" value="RNase_HII/HIII"/>
</dbReference>
<dbReference type="InterPro" id="IPR024567">
    <property type="entry name" value="RNase_HII/HIII_dom"/>
</dbReference>
<dbReference type="InterPro" id="IPR023160">
    <property type="entry name" value="RNase_HII_hlx-loop-hlx_cap_dom"/>
</dbReference>
<dbReference type="InterPro" id="IPR012337">
    <property type="entry name" value="RNaseH-like_sf"/>
</dbReference>
<dbReference type="InterPro" id="IPR036397">
    <property type="entry name" value="RNaseH_sf"/>
</dbReference>
<dbReference type="NCBIfam" id="TIGR00729">
    <property type="entry name" value="ribonuclease HII"/>
    <property type="match status" value="1"/>
</dbReference>
<dbReference type="PANTHER" id="PTHR10954">
    <property type="entry name" value="RIBONUCLEASE H2 SUBUNIT A"/>
    <property type="match status" value="1"/>
</dbReference>
<dbReference type="PANTHER" id="PTHR10954:SF7">
    <property type="entry name" value="RIBONUCLEASE H2 SUBUNIT A"/>
    <property type="match status" value="1"/>
</dbReference>
<dbReference type="Pfam" id="PF01351">
    <property type="entry name" value="RNase_HII"/>
    <property type="match status" value="1"/>
</dbReference>
<dbReference type="SUPFAM" id="SSF53098">
    <property type="entry name" value="Ribonuclease H-like"/>
    <property type="match status" value="1"/>
</dbReference>
<dbReference type="PROSITE" id="PS51975">
    <property type="entry name" value="RNASE_H_2"/>
    <property type="match status" value="1"/>
</dbReference>
<comment type="function">
    <text evidence="1">Endonuclease that specifically degrades the RNA of RNA-DNA hybrids. Participates in DNA replication (By similarity).</text>
</comment>
<comment type="catalytic activity">
    <reaction>
        <text>Endonucleolytic cleavage to 5'-phosphomonoester.</text>
        <dbReference type="EC" id="3.1.26.4"/>
    </reaction>
</comment>
<comment type="cofactor">
    <cofactor evidence="1">
        <name>Mn(2+)</name>
        <dbReference type="ChEBI" id="CHEBI:29035"/>
    </cofactor>
    <cofactor evidence="1">
        <name>Mg(2+)</name>
        <dbReference type="ChEBI" id="CHEBI:18420"/>
    </cofactor>
    <text evidence="1">Manganese or magnesium. Binds 1 divalent metal ion per monomer in the absence of substrate. May bind a second metal ion after substrate binding.</text>
</comment>
<comment type="similarity">
    <text evidence="3">Belongs to the RNase HII family. Eukaryotic subfamily.</text>
</comment>
<gene>
    <name type="primary">rnaseh2A</name>
    <name type="ORF">DDB_G0292584</name>
</gene>
<reference key="1">
    <citation type="journal article" date="2005" name="Nature">
        <title>The genome of the social amoeba Dictyostelium discoideum.</title>
        <authorList>
            <person name="Eichinger L."/>
            <person name="Pachebat J.A."/>
            <person name="Gloeckner G."/>
            <person name="Rajandream M.A."/>
            <person name="Sucgang R."/>
            <person name="Berriman M."/>
            <person name="Song J."/>
            <person name="Olsen R."/>
            <person name="Szafranski K."/>
            <person name="Xu Q."/>
            <person name="Tunggal B."/>
            <person name="Kummerfeld S."/>
            <person name="Madera M."/>
            <person name="Konfortov B.A."/>
            <person name="Rivero F."/>
            <person name="Bankier A.T."/>
            <person name="Lehmann R."/>
            <person name="Hamlin N."/>
            <person name="Davies R."/>
            <person name="Gaudet P."/>
            <person name="Fey P."/>
            <person name="Pilcher K."/>
            <person name="Chen G."/>
            <person name="Saunders D."/>
            <person name="Sodergren E.J."/>
            <person name="Davis P."/>
            <person name="Kerhornou A."/>
            <person name="Nie X."/>
            <person name="Hall N."/>
            <person name="Anjard C."/>
            <person name="Hemphill L."/>
            <person name="Bason N."/>
            <person name="Farbrother P."/>
            <person name="Desany B."/>
            <person name="Just E."/>
            <person name="Morio T."/>
            <person name="Rost R."/>
            <person name="Churcher C.M."/>
            <person name="Cooper J."/>
            <person name="Haydock S."/>
            <person name="van Driessche N."/>
            <person name="Cronin A."/>
            <person name="Goodhead I."/>
            <person name="Muzny D.M."/>
            <person name="Mourier T."/>
            <person name="Pain A."/>
            <person name="Lu M."/>
            <person name="Harper D."/>
            <person name="Lindsay R."/>
            <person name="Hauser H."/>
            <person name="James K.D."/>
            <person name="Quiles M."/>
            <person name="Madan Babu M."/>
            <person name="Saito T."/>
            <person name="Buchrieser C."/>
            <person name="Wardroper A."/>
            <person name="Felder M."/>
            <person name="Thangavelu M."/>
            <person name="Johnson D."/>
            <person name="Knights A."/>
            <person name="Loulseged H."/>
            <person name="Mungall K.L."/>
            <person name="Oliver K."/>
            <person name="Price C."/>
            <person name="Quail M.A."/>
            <person name="Urushihara H."/>
            <person name="Hernandez J."/>
            <person name="Rabbinowitsch E."/>
            <person name="Steffen D."/>
            <person name="Sanders M."/>
            <person name="Ma J."/>
            <person name="Kohara Y."/>
            <person name="Sharp S."/>
            <person name="Simmonds M.N."/>
            <person name="Spiegler S."/>
            <person name="Tivey A."/>
            <person name="Sugano S."/>
            <person name="White B."/>
            <person name="Walker D."/>
            <person name="Woodward J.R."/>
            <person name="Winckler T."/>
            <person name="Tanaka Y."/>
            <person name="Shaulsky G."/>
            <person name="Schleicher M."/>
            <person name="Weinstock G.M."/>
            <person name="Rosenthal A."/>
            <person name="Cox E.C."/>
            <person name="Chisholm R.L."/>
            <person name="Gibbs R.A."/>
            <person name="Loomis W.F."/>
            <person name="Platzer M."/>
            <person name="Kay R.R."/>
            <person name="Williams J.G."/>
            <person name="Dear P.H."/>
            <person name="Noegel A.A."/>
            <person name="Barrell B.G."/>
            <person name="Kuspa A."/>
        </authorList>
    </citation>
    <scope>NUCLEOTIDE SEQUENCE [LARGE SCALE GENOMIC DNA]</scope>
    <source>
        <strain>AX4</strain>
    </source>
</reference>
<accession>Q54D13</accession>